<organism>
    <name type="scientific">Escherichia coli O8 (strain IAI1)</name>
    <dbReference type="NCBI Taxonomy" id="585034"/>
    <lineage>
        <taxon>Bacteria</taxon>
        <taxon>Pseudomonadati</taxon>
        <taxon>Pseudomonadota</taxon>
        <taxon>Gammaproteobacteria</taxon>
        <taxon>Enterobacterales</taxon>
        <taxon>Enterobacteriaceae</taxon>
        <taxon>Escherichia</taxon>
    </lineage>
</organism>
<reference key="1">
    <citation type="journal article" date="2009" name="PLoS Genet.">
        <title>Organised genome dynamics in the Escherichia coli species results in highly diverse adaptive paths.</title>
        <authorList>
            <person name="Touchon M."/>
            <person name="Hoede C."/>
            <person name="Tenaillon O."/>
            <person name="Barbe V."/>
            <person name="Baeriswyl S."/>
            <person name="Bidet P."/>
            <person name="Bingen E."/>
            <person name="Bonacorsi S."/>
            <person name="Bouchier C."/>
            <person name="Bouvet O."/>
            <person name="Calteau A."/>
            <person name="Chiapello H."/>
            <person name="Clermont O."/>
            <person name="Cruveiller S."/>
            <person name="Danchin A."/>
            <person name="Diard M."/>
            <person name="Dossat C."/>
            <person name="Karoui M.E."/>
            <person name="Frapy E."/>
            <person name="Garry L."/>
            <person name="Ghigo J.M."/>
            <person name="Gilles A.M."/>
            <person name="Johnson J."/>
            <person name="Le Bouguenec C."/>
            <person name="Lescat M."/>
            <person name="Mangenot S."/>
            <person name="Martinez-Jehanne V."/>
            <person name="Matic I."/>
            <person name="Nassif X."/>
            <person name="Oztas S."/>
            <person name="Petit M.A."/>
            <person name="Pichon C."/>
            <person name="Rouy Z."/>
            <person name="Ruf C.S."/>
            <person name="Schneider D."/>
            <person name="Tourret J."/>
            <person name="Vacherie B."/>
            <person name="Vallenet D."/>
            <person name="Medigue C."/>
            <person name="Rocha E.P.C."/>
            <person name="Denamur E."/>
        </authorList>
    </citation>
    <scope>NUCLEOTIDE SEQUENCE [LARGE SCALE GENOMIC DNA]</scope>
    <source>
        <strain>IAI1</strain>
    </source>
</reference>
<dbReference type="EC" id="3.5.1.18" evidence="1"/>
<dbReference type="EMBL" id="CU928160">
    <property type="protein sequence ID" value="CAQ99360.1"/>
    <property type="molecule type" value="Genomic_DNA"/>
</dbReference>
<dbReference type="RefSeq" id="WP_001277801.1">
    <property type="nucleotide sequence ID" value="NC_011741.1"/>
</dbReference>
<dbReference type="SMR" id="B7M7H2"/>
<dbReference type="MEROPS" id="M20.010"/>
<dbReference type="KEGG" id="ecr:ECIAI1_2520"/>
<dbReference type="HOGENOM" id="CLU_021802_4_0_6"/>
<dbReference type="UniPathway" id="UPA00034">
    <property type="reaction ID" value="UER00021"/>
</dbReference>
<dbReference type="GO" id="GO:0008777">
    <property type="term" value="F:acetylornithine deacetylase activity"/>
    <property type="evidence" value="ECO:0007669"/>
    <property type="project" value="TreeGrafter"/>
</dbReference>
<dbReference type="GO" id="GO:0050897">
    <property type="term" value="F:cobalt ion binding"/>
    <property type="evidence" value="ECO:0007669"/>
    <property type="project" value="UniProtKB-UniRule"/>
</dbReference>
<dbReference type="GO" id="GO:0009014">
    <property type="term" value="F:succinyl-diaminopimelate desuccinylase activity"/>
    <property type="evidence" value="ECO:0007669"/>
    <property type="project" value="UniProtKB-UniRule"/>
</dbReference>
<dbReference type="GO" id="GO:0008270">
    <property type="term" value="F:zinc ion binding"/>
    <property type="evidence" value="ECO:0007669"/>
    <property type="project" value="UniProtKB-UniRule"/>
</dbReference>
<dbReference type="GO" id="GO:0019877">
    <property type="term" value="P:diaminopimelate biosynthetic process"/>
    <property type="evidence" value="ECO:0007669"/>
    <property type="project" value="UniProtKB-UniRule"/>
</dbReference>
<dbReference type="GO" id="GO:0006526">
    <property type="term" value="P:L-arginine biosynthetic process"/>
    <property type="evidence" value="ECO:0007669"/>
    <property type="project" value="TreeGrafter"/>
</dbReference>
<dbReference type="GO" id="GO:0009089">
    <property type="term" value="P:lysine biosynthetic process via diaminopimelate"/>
    <property type="evidence" value="ECO:0007669"/>
    <property type="project" value="UniProtKB-UniRule"/>
</dbReference>
<dbReference type="CDD" id="cd03891">
    <property type="entry name" value="M20_DapE_proteobac"/>
    <property type="match status" value="1"/>
</dbReference>
<dbReference type="FunFam" id="3.30.70.360:FF:000011">
    <property type="entry name" value="Succinyl-diaminopimelate desuccinylase"/>
    <property type="match status" value="1"/>
</dbReference>
<dbReference type="FunFam" id="3.40.630.10:FF:000005">
    <property type="entry name" value="Succinyl-diaminopimelate desuccinylase"/>
    <property type="match status" value="1"/>
</dbReference>
<dbReference type="FunFam" id="3.40.630.10:FF:000010">
    <property type="entry name" value="Succinyl-diaminopimelate desuccinylase"/>
    <property type="match status" value="1"/>
</dbReference>
<dbReference type="Gene3D" id="3.40.630.10">
    <property type="entry name" value="Zn peptidases"/>
    <property type="match status" value="2"/>
</dbReference>
<dbReference type="HAMAP" id="MF_01690">
    <property type="entry name" value="DapE"/>
    <property type="match status" value="1"/>
</dbReference>
<dbReference type="InterPro" id="IPR001261">
    <property type="entry name" value="ArgE/DapE_CS"/>
</dbReference>
<dbReference type="InterPro" id="IPR036264">
    <property type="entry name" value="Bact_exopeptidase_dim_dom"/>
</dbReference>
<dbReference type="InterPro" id="IPR005941">
    <property type="entry name" value="DapE_proteobac"/>
</dbReference>
<dbReference type="InterPro" id="IPR002933">
    <property type="entry name" value="Peptidase_M20"/>
</dbReference>
<dbReference type="InterPro" id="IPR011650">
    <property type="entry name" value="Peptidase_M20_dimer"/>
</dbReference>
<dbReference type="InterPro" id="IPR050072">
    <property type="entry name" value="Peptidase_M20A"/>
</dbReference>
<dbReference type="NCBIfam" id="TIGR01246">
    <property type="entry name" value="dapE_proteo"/>
    <property type="match status" value="1"/>
</dbReference>
<dbReference type="NCBIfam" id="NF009557">
    <property type="entry name" value="PRK13009.1"/>
    <property type="match status" value="1"/>
</dbReference>
<dbReference type="PANTHER" id="PTHR43808">
    <property type="entry name" value="ACETYLORNITHINE DEACETYLASE"/>
    <property type="match status" value="1"/>
</dbReference>
<dbReference type="PANTHER" id="PTHR43808:SF31">
    <property type="entry name" value="N-ACETYL-L-CITRULLINE DEACETYLASE"/>
    <property type="match status" value="1"/>
</dbReference>
<dbReference type="Pfam" id="PF07687">
    <property type="entry name" value="M20_dimer"/>
    <property type="match status" value="1"/>
</dbReference>
<dbReference type="Pfam" id="PF01546">
    <property type="entry name" value="Peptidase_M20"/>
    <property type="match status" value="1"/>
</dbReference>
<dbReference type="SUPFAM" id="SSF55031">
    <property type="entry name" value="Bacterial exopeptidase dimerisation domain"/>
    <property type="match status" value="1"/>
</dbReference>
<dbReference type="SUPFAM" id="SSF53187">
    <property type="entry name" value="Zn-dependent exopeptidases"/>
    <property type="match status" value="1"/>
</dbReference>
<dbReference type="PROSITE" id="PS00758">
    <property type="entry name" value="ARGE_DAPE_CPG2_1"/>
    <property type="match status" value="1"/>
</dbReference>
<dbReference type="PROSITE" id="PS00759">
    <property type="entry name" value="ARGE_DAPE_CPG2_2"/>
    <property type="match status" value="1"/>
</dbReference>
<feature type="chain" id="PRO_0000375569" description="Succinyl-diaminopimelate desuccinylase">
    <location>
        <begin position="1"/>
        <end position="375"/>
    </location>
</feature>
<feature type="active site" evidence="1">
    <location>
        <position position="68"/>
    </location>
</feature>
<feature type="active site" description="Proton acceptor" evidence="1">
    <location>
        <position position="133"/>
    </location>
</feature>
<feature type="binding site" evidence="1">
    <location>
        <position position="66"/>
    </location>
    <ligand>
        <name>Zn(2+)</name>
        <dbReference type="ChEBI" id="CHEBI:29105"/>
        <label>1</label>
    </ligand>
</feature>
<feature type="binding site" evidence="1">
    <location>
        <position position="99"/>
    </location>
    <ligand>
        <name>Zn(2+)</name>
        <dbReference type="ChEBI" id="CHEBI:29105"/>
        <label>1</label>
    </ligand>
</feature>
<feature type="binding site" evidence="1">
    <location>
        <position position="99"/>
    </location>
    <ligand>
        <name>Zn(2+)</name>
        <dbReference type="ChEBI" id="CHEBI:29105"/>
        <label>2</label>
    </ligand>
</feature>
<feature type="binding site" evidence="1">
    <location>
        <position position="134"/>
    </location>
    <ligand>
        <name>Zn(2+)</name>
        <dbReference type="ChEBI" id="CHEBI:29105"/>
        <label>2</label>
    </ligand>
</feature>
<feature type="binding site" evidence="1">
    <location>
        <position position="162"/>
    </location>
    <ligand>
        <name>Zn(2+)</name>
        <dbReference type="ChEBI" id="CHEBI:29105"/>
        <label>1</label>
    </ligand>
</feature>
<feature type="binding site" evidence="1">
    <location>
        <position position="348"/>
    </location>
    <ligand>
        <name>Zn(2+)</name>
        <dbReference type="ChEBI" id="CHEBI:29105"/>
        <label>2</label>
    </ligand>
</feature>
<sequence length="375" mass="41269">MSCPVIELTQQLIRRPSLSPDDAGCQALLIERLQAIGFTVERMDFADTQNFWAWRGQGETLAFAGHTDVVPPGDADRWINPPFEPTIRDGMLFGRGAADMKGSLAAMVVAAERFVAQHPNHTGRLAFLITSDEEASAHNGTVKVVEALMARNERLDYCLVGEPSSIEVVGDVVKNGRRGSLTCNLTIHGVQGHVAYPHLADNPVHRAAPFLNELVAIEWDQGNEFFPATSMQIANIQAGTGSNNVIPGELFVQFNFRFSTELTDEMIKAQVLALLEKHQLRYTVDWWLSGQPFLTARGKLVDAVVNAVEHYNEIKPQLLTTGGTSDGRFIARMGAQVVELGPVNATIHKINECVNAADLQLLARMYQRIMEQLVA</sequence>
<evidence type="ECO:0000255" key="1">
    <source>
        <dbReference type="HAMAP-Rule" id="MF_01690"/>
    </source>
</evidence>
<keyword id="KW-0028">Amino-acid biosynthesis</keyword>
<keyword id="KW-0170">Cobalt</keyword>
<keyword id="KW-0220">Diaminopimelate biosynthesis</keyword>
<keyword id="KW-0378">Hydrolase</keyword>
<keyword id="KW-0457">Lysine biosynthesis</keyword>
<keyword id="KW-0479">Metal-binding</keyword>
<keyword id="KW-0862">Zinc</keyword>
<accession>B7M7H2</accession>
<comment type="function">
    <text evidence="1">Catalyzes the hydrolysis of N-succinyl-L,L-diaminopimelic acid (SDAP), forming succinate and LL-2,6-diaminopimelate (DAP), an intermediate involved in the bacterial biosynthesis of lysine and meso-diaminopimelic acid, an essential component of bacterial cell walls.</text>
</comment>
<comment type="catalytic activity">
    <reaction evidence="1">
        <text>N-succinyl-(2S,6S)-2,6-diaminopimelate + H2O = (2S,6S)-2,6-diaminopimelate + succinate</text>
        <dbReference type="Rhea" id="RHEA:22608"/>
        <dbReference type="ChEBI" id="CHEBI:15377"/>
        <dbReference type="ChEBI" id="CHEBI:30031"/>
        <dbReference type="ChEBI" id="CHEBI:57609"/>
        <dbReference type="ChEBI" id="CHEBI:58087"/>
        <dbReference type="EC" id="3.5.1.18"/>
    </reaction>
</comment>
<comment type="cofactor">
    <cofactor evidence="1">
        <name>Zn(2+)</name>
        <dbReference type="ChEBI" id="CHEBI:29105"/>
    </cofactor>
    <cofactor evidence="1">
        <name>Co(2+)</name>
        <dbReference type="ChEBI" id="CHEBI:48828"/>
    </cofactor>
    <text evidence="1">Binds 2 Zn(2+) or Co(2+) ions per subunit.</text>
</comment>
<comment type="pathway">
    <text evidence="1">Amino-acid biosynthesis; L-lysine biosynthesis via DAP pathway; LL-2,6-diaminopimelate from (S)-tetrahydrodipicolinate (succinylase route): step 3/3.</text>
</comment>
<comment type="subunit">
    <text evidence="1">Homodimer.</text>
</comment>
<comment type="similarity">
    <text evidence="1">Belongs to the peptidase M20A family. DapE subfamily.</text>
</comment>
<proteinExistence type="inferred from homology"/>
<gene>
    <name evidence="1" type="primary">dapE</name>
    <name type="ordered locus">ECIAI1_2520</name>
</gene>
<protein>
    <recommendedName>
        <fullName evidence="1">Succinyl-diaminopimelate desuccinylase</fullName>
        <shortName evidence="1">SDAP desuccinylase</shortName>
        <ecNumber evidence="1">3.5.1.18</ecNumber>
    </recommendedName>
    <alternativeName>
        <fullName evidence="1">N-succinyl-LL-2,6-diaminoheptanedioate amidohydrolase</fullName>
    </alternativeName>
</protein>
<name>DAPE_ECO8A</name>